<proteinExistence type="inferred from homology"/>
<protein>
    <recommendedName>
        <fullName evidence="1">Small ribosomal subunit protein bS20</fullName>
    </recommendedName>
    <alternativeName>
        <fullName evidence="2">30S ribosomal protein S20</fullName>
    </alternativeName>
</protein>
<feature type="chain" id="PRO_0000224972" description="Small ribosomal subunit protein bS20">
    <location>
        <begin position="1"/>
        <end position="88"/>
    </location>
</feature>
<organism>
    <name type="scientific">Mycoplasmopsis synoviae (strain 53)</name>
    <name type="common">Mycoplasma synoviae</name>
    <dbReference type="NCBI Taxonomy" id="262723"/>
    <lineage>
        <taxon>Bacteria</taxon>
        <taxon>Bacillati</taxon>
        <taxon>Mycoplasmatota</taxon>
        <taxon>Mycoplasmoidales</taxon>
        <taxon>Metamycoplasmataceae</taxon>
        <taxon>Mycoplasmopsis</taxon>
    </lineage>
</organism>
<comment type="function">
    <text evidence="1">Binds directly to 16S ribosomal RNA.</text>
</comment>
<comment type="similarity">
    <text evidence="1">Belongs to the bacterial ribosomal protein bS20 family.</text>
</comment>
<evidence type="ECO:0000255" key="1">
    <source>
        <dbReference type="HAMAP-Rule" id="MF_00500"/>
    </source>
</evidence>
<evidence type="ECO:0000305" key="2"/>
<reference key="1">
    <citation type="journal article" date="2005" name="J. Bacteriol.">
        <title>Swine and poultry pathogens: the complete genome sequences of two strains of Mycoplasma hyopneumoniae and a strain of Mycoplasma synoviae.</title>
        <authorList>
            <person name="Vasconcelos A.T.R."/>
            <person name="Ferreira H.B."/>
            <person name="Bizarro C.V."/>
            <person name="Bonatto S.L."/>
            <person name="Carvalho M.O."/>
            <person name="Pinto P.M."/>
            <person name="Almeida D.F."/>
            <person name="Almeida L.G.P."/>
            <person name="Almeida R."/>
            <person name="Alves-Junior L."/>
            <person name="Assuncao E.N."/>
            <person name="Azevedo V.A.C."/>
            <person name="Bogo M.R."/>
            <person name="Brigido M.M."/>
            <person name="Brocchi M."/>
            <person name="Burity H.A."/>
            <person name="Camargo A.A."/>
            <person name="Camargo S.S."/>
            <person name="Carepo M.S."/>
            <person name="Carraro D.M."/>
            <person name="de Mattos Cascardo J.C."/>
            <person name="Castro L.A."/>
            <person name="Cavalcanti G."/>
            <person name="Chemale G."/>
            <person name="Collevatti R.G."/>
            <person name="Cunha C.W."/>
            <person name="Dallagiovanna B."/>
            <person name="Dambros B.P."/>
            <person name="Dellagostin O.A."/>
            <person name="Falcao C."/>
            <person name="Fantinatti-Garboggini F."/>
            <person name="Felipe M.S.S."/>
            <person name="Fiorentin L."/>
            <person name="Franco G.R."/>
            <person name="Freitas N.S.A."/>
            <person name="Frias D."/>
            <person name="Grangeiro T.B."/>
            <person name="Grisard E.C."/>
            <person name="Guimaraes C.T."/>
            <person name="Hungria M."/>
            <person name="Jardim S.N."/>
            <person name="Krieger M.A."/>
            <person name="Laurino J.P."/>
            <person name="Lima L.F.A."/>
            <person name="Lopes M.I."/>
            <person name="Loreto E.L.S."/>
            <person name="Madeira H.M.F."/>
            <person name="Manfio G.P."/>
            <person name="Maranhao A.Q."/>
            <person name="Martinkovics C.T."/>
            <person name="Medeiros S.R.B."/>
            <person name="Moreira M.A.M."/>
            <person name="Neiva M."/>
            <person name="Ramalho-Neto C.E."/>
            <person name="Nicolas M.F."/>
            <person name="Oliveira S.C."/>
            <person name="Paixao R.F.C."/>
            <person name="Pedrosa F.O."/>
            <person name="Pena S.D.J."/>
            <person name="Pereira M."/>
            <person name="Pereira-Ferrari L."/>
            <person name="Piffer I."/>
            <person name="Pinto L.S."/>
            <person name="Potrich D.P."/>
            <person name="Salim A.C.M."/>
            <person name="Santos F.R."/>
            <person name="Schmitt R."/>
            <person name="Schneider M.P.C."/>
            <person name="Schrank A."/>
            <person name="Schrank I.S."/>
            <person name="Schuck A.F."/>
            <person name="Seuanez H.N."/>
            <person name="Silva D.W."/>
            <person name="Silva R."/>
            <person name="Silva S.C."/>
            <person name="Soares C.M.A."/>
            <person name="Souza K.R.L."/>
            <person name="Souza R.C."/>
            <person name="Staats C.C."/>
            <person name="Steffens M.B.R."/>
            <person name="Teixeira S.M.R."/>
            <person name="Urmenyi T.P."/>
            <person name="Vainstein M.H."/>
            <person name="Zuccherato L.W."/>
            <person name="Simpson A.J.G."/>
            <person name="Zaha A."/>
        </authorList>
    </citation>
    <scope>NUCLEOTIDE SEQUENCE [LARGE SCALE GENOMIC DNA]</scope>
    <source>
        <strain>53</strain>
    </source>
</reference>
<accession>Q4A6X9</accession>
<keyword id="KW-1185">Reference proteome</keyword>
<keyword id="KW-0687">Ribonucleoprotein</keyword>
<keyword id="KW-0689">Ribosomal protein</keyword>
<keyword id="KW-0694">RNA-binding</keyword>
<keyword id="KW-0699">rRNA-binding</keyword>
<sequence length="88" mass="9892">MANIKSKIKNISRIETARVKNAAIKSRVKKAIRKAREAILENSPKAQELVNKAHHEIGKAVSKGVMHLNKGARKSSRLDLFYNKTKTQ</sequence>
<dbReference type="EMBL" id="AE017245">
    <property type="protein sequence ID" value="AAZ43492.1"/>
    <property type="molecule type" value="Genomic_DNA"/>
</dbReference>
<dbReference type="RefSeq" id="WP_011283235.1">
    <property type="nucleotide sequence ID" value="NC_007294.1"/>
</dbReference>
<dbReference type="SMR" id="Q4A6X9"/>
<dbReference type="STRING" id="262723.MS53_0071"/>
<dbReference type="KEGG" id="msy:MS53_0071"/>
<dbReference type="eggNOG" id="COG0268">
    <property type="taxonomic scope" value="Bacteria"/>
</dbReference>
<dbReference type="HOGENOM" id="CLU_160655_1_2_14"/>
<dbReference type="OrthoDB" id="9808392at2"/>
<dbReference type="Proteomes" id="UP000000549">
    <property type="component" value="Chromosome"/>
</dbReference>
<dbReference type="GO" id="GO:0005829">
    <property type="term" value="C:cytosol"/>
    <property type="evidence" value="ECO:0007669"/>
    <property type="project" value="TreeGrafter"/>
</dbReference>
<dbReference type="GO" id="GO:0015935">
    <property type="term" value="C:small ribosomal subunit"/>
    <property type="evidence" value="ECO:0007669"/>
    <property type="project" value="TreeGrafter"/>
</dbReference>
<dbReference type="GO" id="GO:0070181">
    <property type="term" value="F:small ribosomal subunit rRNA binding"/>
    <property type="evidence" value="ECO:0007669"/>
    <property type="project" value="TreeGrafter"/>
</dbReference>
<dbReference type="GO" id="GO:0003735">
    <property type="term" value="F:structural constituent of ribosome"/>
    <property type="evidence" value="ECO:0007669"/>
    <property type="project" value="InterPro"/>
</dbReference>
<dbReference type="GO" id="GO:0006412">
    <property type="term" value="P:translation"/>
    <property type="evidence" value="ECO:0007669"/>
    <property type="project" value="UniProtKB-UniRule"/>
</dbReference>
<dbReference type="Gene3D" id="1.20.58.110">
    <property type="entry name" value="Ribosomal protein S20"/>
    <property type="match status" value="1"/>
</dbReference>
<dbReference type="HAMAP" id="MF_00500">
    <property type="entry name" value="Ribosomal_bS20"/>
    <property type="match status" value="1"/>
</dbReference>
<dbReference type="InterPro" id="IPR002583">
    <property type="entry name" value="Ribosomal_bS20"/>
</dbReference>
<dbReference type="InterPro" id="IPR036510">
    <property type="entry name" value="Ribosomal_bS20_sf"/>
</dbReference>
<dbReference type="NCBIfam" id="TIGR00029">
    <property type="entry name" value="S20"/>
    <property type="match status" value="1"/>
</dbReference>
<dbReference type="PANTHER" id="PTHR33398">
    <property type="entry name" value="30S RIBOSOMAL PROTEIN S20"/>
    <property type="match status" value="1"/>
</dbReference>
<dbReference type="PANTHER" id="PTHR33398:SF1">
    <property type="entry name" value="SMALL RIBOSOMAL SUBUNIT PROTEIN BS20C"/>
    <property type="match status" value="1"/>
</dbReference>
<dbReference type="Pfam" id="PF01649">
    <property type="entry name" value="Ribosomal_S20p"/>
    <property type="match status" value="1"/>
</dbReference>
<dbReference type="SUPFAM" id="SSF46992">
    <property type="entry name" value="Ribosomal protein S20"/>
    <property type="match status" value="1"/>
</dbReference>
<name>RS20_MYCS5</name>
<gene>
    <name evidence="1" type="primary">rpsT</name>
    <name type="ordered locus">MS53_0071</name>
</gene>